<organism>
    <name type="scientific">Thermococcus gammatolerans (strain DSM 15229 / JCM 11827 / EJ3)</name>
    <dbReference type="NCBI Taxonomy" id="593117"/>
    <lineage>
        <taxon>Archaea</taxon>
        <taxon>Methanobacteriati</taxon>
        <taxon>Methanobacteriota</taxon>
        <taxon>Thermococci</taxon>
        <taxon>Thermococcales</taxon>
        <taxon>Thermococcaceae</taxon>
        <taxon>Thermococcus</taxon>
    </lineage>
</organism>
<name>HMGCS_THEGJ</name>
<feature type="chain" id="PRO_1000215219" description="Hydroxymethylglutaryl-CoA synthase">
    <location>
        <begin position="1"/>
        <end position="350"/>
    </location>
</feature>
<feature type="active site" description="Proton donor/acceptor" evidence="1">
    <location>
        <position position="83"/>
    </location>
</feature>
<feature type="active site" description="Acyl-thioester intermediate" evidence="1">
    <location>
        <position position="115"/>
    </location>
</feature>
<feature type="active site" description="Proton donor/acceptor" evidence="1">
    <location>
        <position position="239"/>
    </location>
</feature>
<feature type="binding site" evidence="1">
    <location>
        <position position="115"/>
    </location>
    <ligand>
        <name>(3S)-3-hydroxy-3-methylglutaryl-CoA</name>
        <dbReference type="ChEBI" id="CHEBI:43074"/>
    </ligand>
</feature>
<feature type="binding site" evidence="1">
    <location>
        <position position="156"/>
    </location>
    <ligand>
        <name>(3S)-3-hydroxy-3-methylglutaryl-CoA</name>
        <dbReference type="ChEBI" id="CHEBI:43074"/>
    </ligand>
</feature>
<feature type="binding site" evidence="1">
    <location>
        <position position="204"/>
    </location>
    <ligand>
        <name>CoA</name>
        <dbReference type="ChEBI" id="CHEBI:57287"/>
        <note>ligand shared with acetoacetyl-CoA thiolase</note>
    </ligand>
</feature>
<feature type="binding site" evidence="1">
    <location>
        <position position="206"/>
    </location>
    <ligand>
        <name>(3S)-3-hydroxy-3-methylglutaryl-CoA</name>
        <dbReference type="ChEBI" id="CHEBI:43074"/>
    </ligand>
</feature>
<feature type="binding site" evidence="1">
    <location>
        <position position="239"/>
    </location>
    <ligand>
        <name>(3S)-3-hydroxy-3-methylglutaryl-CoA</name>
        <dbReference type="ChEBI" id="CHEBI:43074"/>
    </ligand>
</feature>
<feature type="binding site" evidence="1">
    <location>
        <position position="244"/>
    </location>
    <ligand>
        <name>CoA</name>
        <dbReference type="ChEBI" id="CHEBI:57287"/>
        <note>ligand shared with acetoacetyl-CoA thiolase</note>
    </ligand>
</feature>
<feature type="binding site" evidence="1">
    <location>
        <position position="271"/>
    </location>
    <ligand>
        <name>(3S)-3-hydroxy-3-methylglutaryl-CoA</name>
        <dbReference type="ChEBI" id="CHEBI:43074"/>
    </ligand>
</feature>
<feature type="binding site" evidence="1">
    <location>
        <position position="301"/>
    </location>
    <ligand>
        <name>(3S)-3-hydroxy-3-methylglutaryl-CoA</name>
        <dbReference type="ChEBI" id="CHEBI:43074"/>
    </ligand>
</feature>
<dbReference type="EC" id="2.3.3.10" evidence="1"/>
<dbReference type="EMBL" id="CP001398">
    <property type="protein sequence ID" value="ACS32963.1"/>
    <property type="molecule type" value="Genomic_DNA"/>
</dbReference>
<dbReference type="RefSeq" id="WP_015858081.1">
    <property type="nucleotide sequence ID" value="NC_012804.1"/>
</dbReference>
<dbReference type="SMR" id="C5A401"/>
<dbReference type="STRING" id="593117.TGAM_0461"/>
<dbReference type="PaxDb" id="593117-TGAM_0461"/>
<dbReference type="GeneID" id="7988008"/>
<dbReference type="KEGG" id="tga:TGAM_0461"/>
<dbReference type="PATRIC" id="fig|593117.10.peg.457"/>
<dbReference type="eggNOG" id="arCOG01767">
    <property type="taxonomic scope" value="Archaea"/>
</dbReference>
<dbReference type="HOGENOM" id="CLU_039592_7_0_2"/>
<dbReference type="OrthoDB" id="5812at2157"/>
<dbReference type="UniPathway" id="UPA00058">
    <property type="reaction ID" value="UER00102"/>
</dbReference>
<dbReference type="Proteomes" id="UP000001488">
    <property type="component" value="Chromosome"/>
</dbReference>
<dbReference type="GO" id="GO:0003985">
    <property type="term" value="F:acetyl-CoA C-acetyltransferase activity"/>
    <property type="evidence" value="ECO:0007669"/>
    <property type="project" value="UniProtKB-UniRule"/>
</dbReference>
<dbReference type="GO" id="GO:0004421">
    <property type="term" value="F:hydroxymethylglutaryl-CoA synthase activity"/>
    <property type="evidence" value="ECO:0007669"/>
    <property type="project" value="InterPro"/>
</dbReference>
<dbReference type="GO" id="GO:0010142">
    <property type="term" value="P:farnesyl diphosphate biosynthetic process, mevalonate pathway"/>
    <property type="evidence" value="ECO:0007669"/>
    <property type="project" value="TreeGrafter"/>
</dbReference>
<dbReference type="GO" id="GO:0019287">
    <property type="term" value="P:isopentenyl diphosphate biosynthetic process, mevalonate pathway"/>
    <property type="evidence" value="ECO:0007669"/>
    <property type="project" value="UniProtKB-UniRule"/>
</dbReference>
<dbReference type="CDD" id="cd00827">
    <property type="entry name" value="init_cond_enzymes"/>
    <property type="match status" value="1"/>
</dbReference>
<dbReference type="FunFam" id="3.40.47.10:FF:000046">
    <property type="entry name" value="UPF0219 protein M1627_1703"/>
    <property type="match status" value="1"/>
</dbReference>
<dbReference type="Gene3D" id="3.40.47.10">
    <property type="match status" value="1"/>
</dbReference>
<dbReference type="HAMAP" id="MF_01409">
    <property type="entry name" value="HMG_CoA_synth_arch"/>
    <property type="match status" value="1"/>
</dbReference>
<dbReference type="InterPro" id="IPR013747">
    <property type="entry name" value="ACP_syn_III_C"/>
</dbReference>
<dbReference type="InterPro" id="IPR004656">
    <property type="entry name" value="HMG_CoA_Synthase"/>
</dbReference>
<dbReference type="InterPro" id="IPR016039">
    <property type="entry name" value="Thiolase-like"/>
</dbReference>
<dbReference type="NCBIfam" id="TIGR00748">
    <property type="entry name" value="HMG_CoA_syn_Arc"/>
    <property type="match status" value="1"/>
</dbReference>
<dbReference type="NCBIfam" id="NF003274">
    <property type="entry name" value="PRK04262.1"/>
    <property type="match status" value="1"/>
</dbReference>
<dbReference type="PANTHER" id="PTHR43323">
    <property type="entry name" value="3-HYDROXY-3-METHYLGLUTARYL COENZYME A SYNTHASE"/>
    <property type="match status" value="1"/>
</dbReference>
<dbReference type="PANTHER" id="PTHR43323:SF2">
    <property type="entry name" value="HYDROXYMETHYLGLUTARYL-COA SYNTHASE"/>
    <property type="match status" value="1"/>
</dbReference>
<dbReference type="Pfam" id="PF08541">
    <property type="entry name" value="ACP_syn_III_C"/>
    <property type="match status" value="1"/>
</dbReference>
<dbReference type="SUPFAM" id="SSF53901">
    <property type="entry name" value="Thiolase-like"/>
    <property type="match status" value="2"/>
</dbReference>
<accession>C5A401</accession>
<proteinExistence type="inferred from homology"/>
<gene>
    <name type="ordered locus">TGAM_0461</name>
</gene>
<keyword id="KW-0012">Acyltransferase</keyword>
<keyword id="KW-0414">Isoprene biosynthesis</keyword>
<keyword id="KW-1185">Reference proteome</keyword>
<keyword id="KW-0808">Transferase</keyword>
<protein>
    <recommendedName>
        <fullName evidence="1">Hydroxymethylglutaryl-CoA synthase</fullName>
        <shortName evidence="1">HMG-CoA synthase</shortName>
        <shortName evidence="1">HMGCS</shortName>
        <ecNumber evidence="1">2.3.3.10</ecNumber>
    </recommendedName>
</protein>
<comment type="function">
    <text evidence="1">Catalyzes the condensation of acetyl-CoA with acetoacetyl-CoA to form 3-hydroxy-3-methylglutaryl-CoA (HMG-CoA). Functions in the mevalonate (MVA) pathway leading to isopentenyl diphosphate (IPP), a key precursor for the biosynthesis of isoprenoid compounds that are building blocks of archaeal membrane lipids.</text>
</comment>
<comment type="catalytic activity">
    <reaction evidence="1">
        <text>acetoacetyl-CoA + acetyl-CoA + H2O = (3S)-3-hydroxy-3-methylglutaryl-CoA + CoA + H(+)</text>
        <dbReference type="Rhea" id="RHEA:10188"/>
        <dbReference type="ChEBI" id="CHEBI:15377"/>
        <dbReference type="ChEBI" id="CHEBI:15378"/>
        <dbReference type="ChEBI" id="CHEBI:43074"/>
        <dbReference type="ChEBI" id="CHEBI:57286"/>
        <dbReference type="ChEBI" id="CHEBI:57287"/>
        <dbReference type="ChEBI" id="CHEBI:57288"/>
        <dbReference type="EC" id="2.3.3.10"/>
    </reaction>
    <physiologicalReaction direction="left-to-right" evidence="1">
        <dbReference type="Rhea" id="RHEA:10189"/>
    </physiologicalReaction>
</comment>
<comment type="pathway">
    <text evidence="1">Metabolic intermediate biosynthesis; (R)-mevalonate biosynthesis; (R)-mevalonate from acetyl-CoA: step 2/3.</text>
</comment>
<comment type="subunit">
    <text evidence="1">Interacts with acetoacetyl-CoA thiolase that catalyzes the precedent step in the pathway and with a DUF35 protein. The acetoacetyl-CoA thiolase/HMG-CoA synthase complex channels the intermediate via a fused CoA-binding site, which allows for efficient coupling of the endergonic thiolase reaction with the exergonic HMGCS reaction.</text>
</comment>
<comment type="similarity">
    <text evidence="1">Belongs to the thiolase-like superfamily. Archaeal HMG-CoA synthase family.</text>
</comment>
<sequence>MRKLLKPKREVGIVGYGAYVPMYRIKAEEIGRVWGVSSFPIEEKAVPGLDEDALTIGLEAARNALKRAGIDPKLIRAVWFGSESKPYAVKPTGTVIAEAIGATPDVSTADFEFACKAGTEALQTAIGFVGSEMADYAMAIGADTAQGRPGDHLEFTAGAGGAAFIVGPKSSETVAYFEGSYSYVTDTPDFWRRQHEHYPRHGNRFTGEPAYFHHIINAAKTLMEELGLTVNDFDYAVFHQPNVKFPLTVAKILGIPKEKVLPGLLSGTIGNTYSGATMVGVSAVLDIAKPGDRILWVSFGSGAGSDAFSVVVQDAIEEKRNLAPKVKDYVERKKYIDYALYAKARRKYIL</sequence>
<reference key="1">
    <citation type="journal article" date="2007" name="Genome Biol.">
        <title>Genome analysis and genome-wide proteomics of Thermococcus gammatolerans, the most radioresistant organism known amongst the Archaea.</title>
        <authorList>
            <person name="Zivanovic Y."/>
            <person name="Armengaud J."/>
            <person name="Lagorce A."/>
            <person name="Leplat C."/>
            <person name="Guerin P."/>
            <person name="Dutertre M."/>
            <person name="Anthouard V."/>
            <person name="Forterre P."/>
            <person name="Wincker P."/>
            <person name="Confalonieri F."/>
        </authorList>
    </citation>
    <scope>NUCLEOTIDE SEQUENCE [LARGE SCALE GENOMIC DNA]</scope>
    <source>
        <strain>DSM 15229 / JCM 11827 / EJ3</strain>
    </source>
</reference>
<evidence type="ECO:0000255" key="1">
    <source>
        <dbReference type="HAMAP-Rule" id="MF_01409"/>
    </source>
</evidence>